<proteinExistence type="inferred from homology"/>
<name>AFFL_DROVI</name>
<protein>
    <recommendedName>
        <fullName evidence="1">AF4/FMR2 family member lilli</fullName>
    </recommendedName>
    <alternativeName>
        <fullName evidence="1">Protein lilliputian</fullName>
    </alternativeName>
</protein>
<reference evidence="5" key="1">
    <citation type="journal article" date="2007" name="Nature">
        <title>Evolution of genes and genomes on the Drosophila phylogeny.</title>
        <authorList>
            <consortium name="Drosophila 12 genomes consortium"/>
        </authorList>
    </citation>
    <scope>NUCLEOTIDE SEQUENCE [LARGE SCALE GENOMIC DNA]</scope>
    <source>
        <strain evidence="5">Tucson 15010-1051.87</strain>
    </source>
</reference>
<gene>
    <name evidence="1" type="primary">lilli</name>
    <name type="ORF">GJ13972</name>
</gene>
<evidence type="ECO:0000250" key="1">
    <source>
        <dbReference type="UniProtKB" id="Q9VQI9"/>
    </source>
</evidence>
<evidence type="ECO:0000255" key="2"/>
<evidence type="ECO:0000256" key="3">
    <source>
        <dbReference type="SAM" id="MobiDB-lite"/>
    </source>
</evidence>
<evidence type="ECO:0000305" key="4"/>
<evidence type="ECO:0000312" key="5">
    <source>
        <dbReference type="EMBL" id="EDW63273.1"/>
    </source>
</evidence>
<sequence length="1823" mass="195478">MAQQQQQQHQQQQHHQQQQQQLQQQQQLLQYNNNSYNLNYNMEDPERRKRREREKYERQQGIQSDDRETSLFGEPRRLNPNEGDPEITAALGDFVDARDYMNASTVGIYRQAPGASNARLQALPKGFGSATTSFSSSSSASASSSASVPGQLPTSQQQQQQQQQQQQQHYQQQQRAPTYLKQADNKPPYNGRGGYPGQPMKNDIPSSSGMAPPRGPPRSSSSSSSSNNNSSSVSNNATAAPTSASTSSPLGPPMSTQMPNGREKSFLGPPAPALPNGGRFVPPSASGKRPSSTAGLQPPPPENHINKIITEMTNNYRVTPLTSIAATPHAPMRENYNLNGPNKFKYAFDAVDPIGPLNSPPAAGASSLMTPLLAPIAPITSPIAPLLTTPPQASQLPLPLPPMAGATTVPPSMAMGAVAPMQQLTPTPPKASPTPPVIKPLKTEKNHSLEKQDSCLENDLELSESDDERKKDSRSAGNSSNSSESDSSESGSEASSKGDPQQQQQQQQQHLLHQQQQHQQQQLLLQQQQQQRLAATANGSKKKYSQTIIASGANTISGLLTSSGLGGTGAGPGGAVNSTGSAAGGVGSGSGSTGGGSSSSGMGTMSSSNSSNKTPSPTDSNRWHLSRFFPKPANQTAAESVSPGVANAMGNVSMKVPGILPGGAQIIPESIDVTTAIVKNEKLHDDSRHMDDDEDEQADQQHQQQQQRYGVGLSVTVKKEQLEQQQQQQQQQQLLLQQQQLTAEQLALAGALPKNQIKRESRLSDSGSGSSGSGSSSSDSAGGSSEVLPMPGPGETLQIPGVPAAITTVMRVPPATQHKAQPNSVTLTPIGPLPASPKPRQKKPRKKKMSAATAPPLDSSDEDEPANSNKKHALELAATAAAAAANAAAASVMPVAAAAAAAAAPAIKKGRGRPRKQAQQQQQQLQLQQQQQQSGNLSSASASSSQAKGPTLTAAKKPLAKGTASSSSSSGTAATVAAGSRKREHSSNSSSNGNTPTKKPNAAMAAAAAAAAAAAAAAIAVRAASSSDEDSSSSSCSSTKSSNSNSSSSGSDTDIPTAAPAVTTAAAVAAAAAQNPAKKRIVKINKVGVASSKAKRRFSLGNSSNSSSSETEEQQQQFLQQQQQQQQQKQQLQQQQQQQPQQQQLQQHHQLQQQQQQQLLQGHFAPELPLQTLKQSAQQRLSSSDCSSSASSDSSSNSSASSSSDEDDAHRSGKRKSDKKKICTLTRIFNPKEGGAKKQGQVVIIDQSEEQLQQQQQQQQQQQQQQQQQQQQQQQQQQQQAKELKPRATPTQLLGATLASPARTTTPHLTSLMCKIDLSKLARQHHHQPERLKTQQNGHLSSRSAEGARTPKELQQIYAPNGYVGGALGGAAGAAAGNKLLGGVKHEHGVKPEPELDAGYEAKYKPNSVKQEFMLKQELPARRRKRSSSSSSSPYKEKKRKKEKAEQLSKELLPVPVLLPANNHERLSRDKLELLLQQQENSANASPNKLQQQNARQLPLSQSQLQHQHQHQHQLQQQQSQSTATGHAIASTTSATVATASTQLPTTCSEAVQTTPPPAAPPPAPRLIYRSHFDNEEEHASDDHRKNDLLLQEAIRRKRAADSERDSFNQMTLYLEAIVYFLLTADAMERCNMEATWTMYKDTLSLIKYISSKNRPYQQLTNGKHESHNIVAILSLRCQSLISLKLYKLRRANCRATIASCSEFFRSGRGDILNGNTPSSISPSNSVGSQGSGSNTPPGKIVPQDIHNQLCKQNEYLTYVNSAHELWDQADRLVRTGNHIDFIRKLDHENGPLTLHSTMHEVFRYVQAGLKTLRDAVSYPQSQ</sequence>
<keyword id="KW-0217">Developmental protein</keyword>
<keyword id="KW-0238">DNA-binding</keyword>
<keyword id="KW-0539">Nucleus</keyword>
<keyword id="KW-0562">Pair-rule protein</keyword>
<keyword id="KW-0597">Phosphoprotein</keyword>
<keyword id="KW-1185">Reference proteome</keyword>
<keyword id="KW-0804">Transcription</keyword>
<keyword id="KW-0805">Transcription regulation</keyword>
<dbReference type="EMBL" id="CH940649">
    <property type="protein sequence ID" value="EDW63273.1"/>
    <property type="status" value="ALT_SEQ"/>
    <property type="molecule type" value="Genomic_DNA"/>
</dbReference>
<dbReference type="RefSeq" id="XP_002051118.2">
    <property type="nucleotide sequence ID" value="XM_002051082.2"/>
</dbReference>
<dbReference type="SMR" id="B4LV24"/>
<dbReference type="FunCoup" id="B4LV24">
    <property type="interactions" value="251"/>
</dbReference>
<dbReference type="STRING" id="7244.B4LV24"/>
<dbReference type="eggNOG" id="ENOG502QR32">
    <property type="taxonomic scope" value="Eukaryota"/>
</dbReference>
<dbReference type="InParanoid" id="B4LV24"/>
<dbReference type="OrthoDB" id="6382204at2759"/>
<dbReference type="ChiTaRS" id="lilli">
    <property type="organism name" value="fly"/>
</dbReference>
<dbReference type="Proteomes" id="UP000008792">
    <property type="component" value="Unassembled WGS sequence"/>
</dbReference>
<dbReference type="GO" id="GO:0005634">
    <property type="term" value="C:nucleus"/>
    <property type="evidence" value="ECO:0000250"/>
    <property type="project" value="UniProtKB"/>
</dbReference>
<dbReference type="GO" id="GO:0032783">
    <property type="term" value="C:super elongation complex"/>
    <property type="evidence" value="ECO:0007669"/>
    <property type="project" value="TreeGrafter"/>
</dbReference>
<dbReference type="GO" id="GO:0003677">
    <property type="term" value="F:DNA binding"/>
    <property type="evidence" value="ECO:0007669"/>
    <property type="project" value="UniProtKB-KW"/>
</dbReference>
<dbReference type="GO" id="GO:0003712">
    <property type="term" value="F:transcription coregulator activity"/>
    <property type="evidence" value="ECO:0000250"/>
    <property type="project" value="UniProtKB"/>
</dbReference>
<dbReference type="GO" id="GO:0007366">
    <property type="term" value="P:periodic partitioning by pair rule gene"/>
    <property type="evidence" value="ECO:0000250"/>
    <property type="project" value="UniProtKB"/>
</dbReference>
<dbReference type="GO" id="GO:0051493">
    <property type="term" value="P:regulation of cytoskeleton organization"/>
    <property type="evidence" value="ECO:0000250"/>
    <property type="project" value="UniProtKB"/>
</dbReference>
<dbReference type="GO" id="GO:0006355">
    <property type="term" value="P:regulation of DNA-templated transcription"/>
    <property type="evidence" value="ECO:0000250"/>
    <property type="project" value="UniProtKB"/>
</dbReference>
<dbReference type="GO" id="GO:0032368">
    <property type="term" value="P:regulation of lipid transport"/>
    <property type="evidence" value="ECO:0000250"/>
    <property type="project" value="UniProtKB"/>
</dbReference>
<dbReference type="InterPro" id="IPR007797">
    <property type="entry name" value="AF4/FMR2"/>
</dbReference>
<dbReference type="InterPro" id="IPR043640">
    <property type="entry name" value="AF4/FMR2_CHD"/>
</dbReference>
<dbReference type="InterPro" id="IPR000637">
    <property type="entry name" value="HMGI/Y_DNA-bd_CS"/>
</dbReference>
<dbReference type="PANTHER" id="PTHR10528">
    <property type="entry name" value="AF4/FMR2 FAMILY MEMBER"/>
    <property type="match status" value="1"/>
</dbReference>
<dbReference type="PANTHER" id="PTHR10528:SF17">
    <property type="entry name" value="AF4_FMR2 FAMILY MEMBER LILLI"/>
    <property type="match status" value="1"/>
</dbReference>
<dbReference type="Pfam" id="PF18876">
    <property type="entry name" value="AFF4_CHD"/>
    <property type="match status" value="1"/>
</dbReference>
<dbReference type="PROSITE" id="PS00354">
    <property type="entry name" value="HMGI_Y"/>
    <property type="match status" value="1"/>
</dbReference>
<accession>B4LV24</accession>
<feature type="chain" id="PRO_0000394678" description="AF4/FMR2 family member lilli">
    <location>
        <begin position="1"/>
        <end position="1823"/>
    </location>
</feature>
<feature type="DNA-binding region" description="A.T hook" evidence="2">
    <location>
        <begin position="908"/>
        <end position="920"/>
    </location>
</feature>
<feature type="region of interest" description="Disordered" evidence="3">
    <location>
        <begin position="1"/>
        <end position="87"/>
    </location>
</feature>
<feature type="region of interest" description="Disordered" evidence="3">
    <location>
        <begin position="126"/>
        <end position="305"/>
    </location>
</feature>
<feature type="region of interest" description="Disordered" evidence="3">
    <location>
        <begin position="422"/>
        <end position="544"/>
    </location>
</feature>
<feature type="region of interest" description="Disordered" evidence="3">
    <location>
        <begin position="570"/>
        <end position="626"/>
    </location>
</feature>
<feature type="region of interest" description="Disordered" evidence="3">
    <location>
        <begin position="686"/>
        <end position="712"/>
    </location>
</feature>
<feature type="region of interest" description="Disordered" evidence="3">
    <location>
        <begin position="753"/>
        <end position="1057"/>
    </location>
</feature>
<feature type="region of interest" description="Disordered" evidence="3">
    <location>
        <begin position="1071"/>
        <end position="1287"/>
    </location>
</feature>
<feature type="region of interest" description="Disordered" evidence="3">
    <location>
        <begin position="1322"/>
        <end position="1350"/>
    </location>
</feature>
<feature type="region of interest" description="Disordered" evidence="3">
    <location>
        <begin position="1413"/>
        <end position="1448"/>
    </location>
</feature>
<feature type="region of interest" description="Disordered" evidence="3">
    <location>
        <begin position="1480"/>
        <end position="1531"/>
    </location>
</feature>
<feature type="region of interest" description="Disordered" evidence="3">
    <location>
        <begin position="1547"/>
        <end position="1567"/>
    </location>
</feature>
<feature type="region of interest" description="Disordered" evidence="3">
    <location>
        <begin position="1715"/>
        <end position="1744"/>
    </location>
</feature>
<feature type="compositionally biased region" description="Low complexity" evidence="3">
    <location>
        <begin position="1"/>
        <end position="41"/>
    </location>
</feature>
<feature type="compositionally biased region" description="Basic and acidic residues" evidence="3">
    <location>
        <begin position="53"/>
        <end position="79"/>
    </location>
</feature>
<feature type="compositionally biased region" description="Low complexity" evidence="3">
    <location>
        <begin position="126"/>
        <end position="147"/>
    </location>
</feature>
<feature type="compositionally biased region" description="Low complexity" evidence="3">
    <location>
        <begin position="156"/>
        <end position="174"/>
    </location>
</feature>
<feature type="compositionally biased region" description="Low complexity" evidence="3">
    <location>
        <begin position="205"/>
        <end position="249"/>
    </location>
</feature>
<feature type="compositionally biased region" description="Pro residues" evidence="3">
    <location>
        <begin position="426"/>
        <end position="438"/>
    </location>
</feature>
<feature type="compositionally biased region" description="Basic and acidic residues" evidence="3">
    <location>
        <begin position="441"/>
        <end position="454"/>
    </location>
</feature>
<feature type="compositionally biased region" description="Acidic residues" evidence="3">
    <location>
        <begin position="456"/>
        <end position="466"/>
    </location>
</feature>
<feature type="compositionally biased region" description="Low complexity" evidence="3">
    <location>
        <begin position="475"/>
        <end position="531"/>
    </location>
</feature>
<feature type="compositionally biased region" description="Gly residues" evidence="3">
    <location>
        <begin position="582"/>
        <end position="598"/>
    </location>
</feature>
<feature type="compositionally biased region" description="Low complexity" evidence="3">
    <location>
        <begin position="599"/>
        <end position="612"/>
    </location>
</feature>
<feature type="compositionally biased region" description="Low complexity" evidence="3">
    <location>
        <begin position="764"/>
        <end position="785"/>
    </location>
</feature>
<feature type="compositionally biased region" description="Polar residues" evidence="3">
    <location>
        <begin position="818"/>
        <end position="827"/>
    </location>
</feature>
<feature type="compositionally biased region" description="Basic residues" evidence="3">
    <location>
        <begin position="839"/>
        <end position="849"/>
    </location>
</feature>
<feature type="compositionally biased region" description="Low complexity" evidence="3">
    <location>
        <begin position="877"/>
        <end position="906"/>
    </location>
</feature>
<feature type="compositionally biased region" description="Low complexity" evidence="3">
    <location>
        <begin position="917"/>
        <end position="947"/>
    </location>
</feature>
<feature type="compositionally biased region" description="Low complexity" evidence="3">
    <location>
        <begin position="962"/>
        <end position="979"/>
    </location>
</feature>
<feature type="compositionally biased region" description="Low complexity" evidence="3">
    <location>
        <begin position="1002"/>
        <end position="1057"/>
    </location>
</feature>
<feature type="compositionally biased region" description="Low complexity" evidence="3">
    <location>
        <begin position="1102"/>
        <end position="1161"/>
    </location>
</feature>
<feature type="compositionally biased region" description="Polar residues" evidence="3">
    <location>
        <begin position="1172"/>
        <end position="1181"/>
    </location>
</feature>
<feature type="compositionally biased region" description="Low complexity" evidence="3">
    <location>
        <begin position="1182"/>
        <end position="1203"/>
    </location>
</feature>
<feature type="compositionally biased region" description="Low complexity" evidence="3">
    <location>
        <begin position="1253"/>
        <end position="1280"/>
    </location>
</feature>
<feature type="compositionally biased region" description="Polar residues" evidence="3">
    <location>
        <begin position="1334"/>
        <end position="1344"/>
    </location>
</feature>
<feature type="compositionally biased region" description="Polar residues" evidence="3">
    <location>
        <begin position="1480"/>
        <end position="1496"/>
    </location>
</feature>
<feature type="compositionally biased region" description="Low complexity" evidence="3">
    <location>
        <begin position="1497"/>
        <end position="1531"/>
    </location>
</feature>
<feature type="compositionally biased region" description="Pro residues" evidence="3">
    <location>
        <begin position="1555"/>
        <end position="1565"/>
    </location>
</feature>
<feature type="compositionally biased region" description="Low complexity" evidence="3">
    <location>
        <begin position="1715"/>
        <end position="1735"/>
    </location>
</feature>
<feature type="modified residue" description="Phosphothreonine" evidence="1">
    <location>
        <position position="434"/>
    </location>
</feature>
<feature type="modified residue" description="Phosphoserine" evidence="1">
    <location>
        <position position="463"/>
    </location>
</feature>
<feature type="modified residue" description="Phosphoserine" evidence="1">
    <location>
        <position position="465"/>
    </location>
</feature>
<feature type="modified residue" description="Phosphoserine" evidence="1">
    <location>
        <position position="859"/>
    </location>
</feature>
<feature type="modified residue" description="Phosphoserine" evidence="1">
    <location>
        <position position="860"/>
    </location>
</feature>
<feature type="modified residue" description="Phosphoserine" evidence="1">
    <location>
        <position position="939"/>
    </location>
</feature>
<feature type="modified residue" description="Phosphoserine" evidence="1">
    <location>
        <position position="941"/>
    </location>
</feature>
<feature type="modified residue" description="Phosphoserine" evidence="1">
    <location>
        <position position="1486"/>
    </location>
</feature>
<comment type="function">
    <text evidence="1">Has a role in transcriptional regulation. Acts in parallel with the Ras/MAPK and the PI3K/PKB pathways in the control of cell identity and cellular growth. Essential for regulation of the cytoskeleton and cell growth but not for cell proliferation or growth rate. Required specifically for the microtubule-based basal transport of lipid droplets. Plays a partially redundant function downstream of Raf in cell fate specification in the developing eye. Pair-rule protein that regulates embryonic cellularization, gastrulation and segmentation (By similarity).</text>
</comment>
<comment type="subcellular location">
    <subcellularLocation>
        <location evidence="1">Nucleus</location>
    </subcellularLocation>
</comment>
<comment type="similarity">
    <text evidence="2">Belongs to the AF4 family.</text>
</comment>
<comment type="sequence caution" evidence="4">
    <conflict type="erroneous gene model prediction">
        <sequence resource="EMBL-CDS" id="EDW63273"/>
    </conflict>
</comment>
<organism>
    <name type="scientific">Drosophila virilis</name>
    <name type="common">Fruit fly</name>
    <dbReference type="NCBI Taxonomy" id="7244"/>
    <lineage>
        <taxon>Eukaryota</taxon>
        <taxon>Metazoa</taxon>
        <taxon>Ecdysozoa</taxon>
        <taxon>Arthropoda</taxon>
        <taxon>Hexapoda</taxon>
        <taxon>Insecta</taxon>
        <taxon>Pterygota</taxon>
        <taxon>Neoptera</taxon>
        <taxon>Endopterygota</taxon>
        <taxon>Diptera</taxon>
        <taxon>Brachycera</taxon>
        <taxon>Muscomorpha</taxon>
        <taxon>Ephydroidea</taxon>
        <taxon>Drosophilidae</taxon>
        <taxon>Drosophila</taxon>
    </lineage>
</organism>